<feature type="chain" id="PRO_1000134632" description="Small ribosomal subunit protein uS12">
    <location>
        <begin position="1"/>
        <end position="125"/>
    </location>
</feature>
<feature type="modified residue" description="3-methylthioaspartic acid" evidence="1">
    <location>
        <position position="89"/>
    </location>
</feature>
<protein>
    <recommendedName>
        <fullName evidence="2">Small ribosomal subunit protein uS12</fullName>
    </recommendedName>
    <alternativeName>
        <fullName evidence="3">30S ribosomal protein S12</fullName>
    </alternativeName>
</protein>
<gene>
    <name evidence="2" type="primary">rpsL</name>
    <name type="ordered locus">Dtpsy_0268</name>
</gene>
<accession>B9MB68</accession>
<reference key="1">
    <citation type="submission" date="2009-01" db="EMBL/GenBank/DDBJ databases">
        <title>Complete sequence of Diaphorobacter sp. TPSY.</title>
        <authorList>
            <consortium name="US DOE Joint Genome Institute"/>
            <person name="Lucas S."/>
            <person name="Copeland A."/>
            <person name="Lapidus A."/>
            <person name="Glavina del Rio T."/>
            <person name="Tice H."/>
            <person name="Bruce D."/>
            <person name="Goodwin L."/>
            <person name="Pitluck S."/>
            <person name="Chertkov O."/>
            <person name="Brettin T."/>
            <person name="Detter J.C."/>
            <person name="Han C."/>
            <person name="Larimer F."/>
            <person name="Land M."/>
            <person name="Hauser L."/>
            <person name="Kyrpides N."/>
            <person name="Mikhailova N."/>
            <person name="Coates J.D."/>
        </authorList>
    </citation>
    <scope>NUCLEOTIDE SEQUENCE [LARGE SCALE GENOMIC DNA]</scope>
    <source>
        <strain>TPSY</strain>
    </source>
</reference>
<proteinExistence type="inferred from homology"/>
<sequence length="125" mass="13905">MPTINQLVRQGRTVEVVKSKSPAMENCPQRRGVCTRVYTTTPKKPNSALRKVAKVRLTNGFEVISYIGGEGHNLQEHSVVLVRGGRVKDLPGVRYHIVRGSLDLQGVKDRKQARSKYGAKKPKAK</sequence>
<organism>
    <name type="scientific">Acidovorax ebreus (strain TPSY)</name>
    <name type="common">Diaphorobacter sp. (strain TPSY)</name>
    <dbReference type="NCBI Taxonomy" id="535289"/>
    <lineage>
        <taxon>Bacteria</taxon>
        <taxon>Pseudomonadati</taxon>
        <taxon>Pseudomonadota</taxon>
        <taxon>Betaproteobacteria</taxon>
        <taxon>Burkholderiales</taxon>
        <taxon>Comamonadaceae</taxon>
        <taxon>Diaphorobacter</taxon>
    </lineage>
</organism>
<dbReference type="EMBL" id="CP001392">
    <property type="protein sequence ID" value="ACM31752.1"/>
    <property type="molecule type" value="Genomic_DNA"/>
</dbReference>
<dbReference type="RefSeq" id="WP_003059441.1">
    <property type="nucleotide sequence ID" value="NC_011992.1"/>
</dbReference>
<dbReference type="SMR" id="B9MB68"/>
<dbReference type="GeneID" id="94689728"/>
<dbReference type="KEGG" id="dia:Dtpsy_0268"/>
<dbReference type="eggNOG" id="COG0048">
    <property type="taxonomic scope" value="Bacteria"/>
</dbReference>
<dbReference type="HOGENOM" id="CLU_104295_1_2_4"/>
<dbReference type="Proteomes" id="UP000000450">
    <property type="component" value="Chromosome"/>
</dbReference>
<dbReference type="GO" id="GO:0015935">
    <property type="term" value="C:small ribosomal subunit"/>
    <property type="evidence" value="ECO:0007669"/>
    <property type="project" value="InterPro"/>
</dbReference>
<dbReference type="GO" id="GO:0019843">
    <property type="term" value="F:rRNA binding"/>
    <property type="evidence" value="ECO:0007669"/>
    <property type="project" value="UniProtKB-UniRule"/>
</dbReference>
<dbReference type="GO" id="GO:0003735">
    <property type="term" value="F:structural constituent of ribosome"/>
    <property type="evidence" value="ECO:0007669"/>
    <property type="project" value="InterPro"/>
</dbReference>
<dbReference type="GO" id="GO:0000049">
    <property type="term" value="F:tRNA binding"/>
    <property type="evidence" value="ECO:0007669"/>
    <property type="project" value="UniProtKB-UniRule"/>
</dbReference>
<dbReference type="GO" id="GO:0006412">
    <property type="term" value="P:translation"/>
    <property type="evidence" value="ECO:0007669"/>
    <property type="project" value="UniProtKB-UniRule"/>
</dbReference>
<dbReference type="CDD" id="cd03368">
    <property type="entry name" value="Ribosomal_S12"/>
    <property type="match status" value="1"/>
</dbReference>
<dbReference type="FunFam" id="2.40.50.140:FF:000001">
    <property type="entry name" value="30S ribosomal protein S12"/>
    <property type="match status" value="1"/>
</dbReference>
<dbReference type="Gene3D" id="2.40.50.140">
    <property type="entry name" value="Nucleic acid-binding proteins"/>
    <property type="match status" value="1"/>
</dbReference>
<dbReference type="HAMAP" id="MF_00403_B">
    <property type="entry name" value="Ribosomal_uS12_B"/>
    <property type="match status" value="1"/>
</dbReference>
<dbReference type="InterPro" id="IPR012340">
    <property type="entry name" value="NA-bd_OB-fold"/>
</dbReference>
<dbReference type="InterPro" id="IPR006032">
    <property type="entry name" value="Ribosomal_uS12"/>
</dbReference>
<dbReference type="InterPro" id="IPR005679">
    <property type="entry name" value="Ribosomal_uS12_bac"/>
</dbReference>
<dbReference type="NCBIfam" id="TIGR00981">
    <property type="entry name" value="rpsL_bact"/>
    <property type="match status" value="1"/>
</dbReference>
<dbReference type="PANTHER" id="PTHR11652">
    <property type="entry name" value="30S RIBOSOMAL PROTEIN S12 FAMILY MEMBER"/>
    <property type="match status" value="1"/>
</dbReference>
<dbReference type="Pfam" id="PF00164">
    <property type="entry name" value="Ribosom_S12_S23"/>
    <property type="match status" value="1"/>
</dbReference>
<dbReference type="PIRSF" id="PIRSF002133">
    <property type="entry name" value="Ribosomal_S12/S23"/>
    <property type="match status" value="1"/>
</dbReference>
<dbReference type="PRINTS" id="PR01034">
    <property type="entry name" value="RIBOSOMALS12"/>
</dbReference>
<dbReference type="SUPFAM" id="SSF50249">
    <property type="entry name" value="Nucleic acid-binding proteins"/>
    <property type="match status" value="1"/>
</dbReference>
<dbReference type="PROSITE" id="PS00055">
    <property type="entry name" value="RIBOSOMAL_S12"/>
    <property type="match status" value="1"/>
</dbReference>
<evidence type="ECO:0000250" key="1"/>
<evidence type="ECO:0000255" key="2">
    <source>
        <dbReference type="HAMAP-Rule" id="MF_00403"/>
    </source>
</evidence>
<evidence type="ECO:0000305" key="3"/>
<name>RS12_ACIET</name>
<keyword id="KW-0488">Methylation</keyword>
<keyword id="KW-1185">Reference proteome</keyword>
<keyword id="KW-0687">Ribonucleoprotein</keyword>
<keyword id="KW-0689">Ribosomal protein</keyword>
<keyword id="KW-0694">RNA-binding</keyword>
<keyword id="KW-0699">rRNA-binding</keyword>
<keyword id="KW-0820">tRNA-binding</keyword>
<comment type="function">
    <text evidence="2">With S4 and S5 plays an important role in translational accuracy.</text>
</comment>
<comment type="function">
    <text evidence="2">Interacts with and stabilizes bases of the 16S rRNA that are involved in tRNA selection in the A site and with the mRNA backbone. Located at the interface of the 30S and 50S subunits, it traverses the body of the 30S subunit contacting proteins on the other side and probably holding the rRNA structure together. The combined cluster of proteins S8, S12 and S17 appears to hold together the shoulder and platform of the 30S subunit.</text>
</comment>
<comment type="subunit">
    <text evidence="2">Part of the 30S ribosomal subunit. Contacts proteins S8 and S17. May interact with IF1 in the 30S initiation complex.</text>
</comment>
<comment type="similarity">
    <text evidence="2">Belongs to the universal ribosomal protein uS12 family.</text>
</comment>